<proteinExistence type="inferred from homology"/>
<dbReference type="EC" id="2.4.2.17" evidence="1"/>
<dbReference type="EMBL" id="CP000738">
    <property type="protein sequence ID" value="ABR59262.1"/>
    <property type="molecule type" value="Genomic_DNA"/>
</dbReference>
<dbReference type="RefSeq" id="WP_011974610.1">
    <property type="nucleotide sequence ID" value="NC_009636.1"/>
</dbReference>
<dbReference type="RefSeq" id="YP_001326097.1">
    <property type="nucleotide sequence ID" value="NC_009636.1"/>
</dbReference>
<dbReference type="SMR" id="A6U6I2"/>
<dbReference type="STRING" id="366394.Smed_0405"/>
<dbReference type="GeneID" id="61609679"/>
<dbReference type="KEGG" id="smd:Smed_0405"/>
<dbReference type="PATRIC" id="fig|366394.8.peg.3484"/>
<dbReference type="eggNOG" id="COG0040">
    <property type="taxonomic scope" value="Bacteria"/>
</dbReference>
<dbReference type="HOGENOM" id="CLU_038115_0_1_5"/>
<dbReference type="OrthoDB" id="9806435at2"/>
<dbReference type="UniPathway" id="UPA00031">
    <property type="reaction ID" value="UER00006"/>
</dbReference>
<dbReference type="Proteomes" id="UP000001108">
    <property type="component" value="Chromosome"/>
</dbReference>
<dbReference type="GO" id="GO:0005737">
    <property type="term" value="C:cytoplasm"/>
    <property type="evidence" value="ECO:0007669"/>
    <property type="project" value="UniProtKB-SubCell"/>
</dbReference>
<dbReference type="GO" id="GO:0005524">
    <property type="term" value="F:ATP binding"/>
    <property type="evidence" value="ECO:0007669"/>
    <property type="project" value="UniProtKB-KW"/>
</dbReference>
<dbReference type="GO" id="GO:0003879">
    <property type="term" value="F:ATP phosphoribosyltransferase activity"/>
    <property type="evidence" value="ECO:0007669"/>
    <property type="project" value="UniProtKB-UniRule"/>
</dbReference>
<dbReference type="GO" id="GO:0000105">
    <property type="term" value="P:L-histidine biosynthetic process"/>
    <property type="evidence" value="ECO:0007669"/>
    <property type="project" value="UniProtKB-UniRule"/>
</dbReference>
<dbReference type="CDD" id="cd13593">
    <property type="entry name" value="PBP2_HisGL3"/>
    <property type="match status" value="1"/>
</dbReference>
<dbReference type="Gene3D" id="3.40.190.10">
    <property type="entry name" value="Periplasmic binding protein-like II"/>
    <property type="match status" value="2"/>
</dbReference>
<dbReference type="HAMAP" id="MF_01018">
    <property type="entry name" value="HisG_Short"/>
    <property type="match status" value="1"/>
</dbReference>
<dbReference type="InterPro" id="IPR013820">
    <property type="entry name" value="ATP_PRibTrfase_cat"/>
</dbReference>
<dbReference type="InterPro" id="IPR018198">
    <property type="entry name" value="ATP_PRibTrfase_CS"/>
</dbReference>
<dbReference type="InterPro" id="IPR001348">
    <property type="entry name" value="ATP_PRibTrfase_HisG"/>
</dbReference>
<dbReference type="InterPro" id="IPR024893">
    <property type="entry name" value="ATP_PRibTrfase_HisG_short"/>
</dbReference>
<dbReference type="NCBIfam" id="TIGR00070">
    <property type="entry name" value="hisG"/>
    <property type="match status" value="1"/>
</dbReference>
<dbReference type="PANTHER" id="PTHR21403:SF8">
    <property type="entry name" value="ATP PHOSPHORIBOSYLTRANSFERASE"/>
    <property type="match status" value="1"/>
</dbReference>
<dbReference type="PANTHER" id="PTHR21403">
    <property type="entry name" value="ATP PHOSPHORIBOSYLTRANSFERASE ATP-PRTASE"/>
    <property type="match status" value="1"/>
</dbReference>
<dbReference type="Pfam" id="PF01634">
    <property type="entry name" value="HisG"/>
    <property type="match status" value="1"/>
</dbReference>
<dbReference type="SUPFAM" id="SSF53850">
    <property type="entry name" value="Periplasmic binding protein-like II"/>
    <property type="match status" value="1"/>
</dbReference>
<dbReference type="PROSITE" id="PS01316">
    <property type="entry name" value="ATP_P_PHORIBOSYLTR"/>
    <property type="match status" value="1"/>
</dbReference>
<name>HIS1_SINMW</name>
<evidence type="ECO:0000255" key="1">
    <source>
        <dbReference type="HAMAP-Rule" id="MF_01018"/>
    </source>
</evidence>
<protein>
    <recommendedName>
        <fullName evidence="1">ATP phosphoribosyltransferase</fullName>
        <shortName evidence="1">ATP-PRT</shortName>
        <shortName evidence="1">ATP-PRTase</shortName>
        <ecNumber evidence="1">2.4.2.17</ecNumber>
    </recommendedName>
</protein>
<sequence>MTVTIALPSKGRMKDESSAIFERAGMRITAVGNDRSYRGRVEGVEDVEITFLSASEIAREIGSGAVDFGVTGEDLVREGLADADARVEFAARLGFGHADVVVAVPEIWYDVDTMADLGDVAADFRARHGRRLAIATKYWRLTQQFFSGSHGIQLYRIVESLGATEGAPASGSADIIVDITSTGSTLKANHLKILSDGVILRSEACLVRARKAEHGGNPLIDRILAAVRSAL</sequence>
<organism>
    <name type="scientific">Sinorhizobium medicae (strain WSM419)</name>
    <name type="common">Ensifer medicae</name>
    <dbReference type="NCBI Taxonomy" id="366394"/>
    <lineage>
        <taxon>Bacteria</taxon>
        <taxon>Pseudomonadati</taxon>
        <taxon>Pseudomonadota</taxon>
        <taxon>Alphaproteobacteria</taxon>
        <taxon>Hyphomicrobiales</taxon>
        <taxon>Rhizobiaceae</taxon>
        <taxon>Sinorhizobium/Ensifer group</taxon>
        <taxon>Sinorhizobium</taxon>
    </lineage>
</organism>
<accession>A6U6I2</accession>
<comment type="function">
    <text evidence="1">Catalyzes the condensation of ATP and 5-phosphoribose 1-diphosphate to form N'-(5'-phosphoribosyl)-ATP (PR-ATP). Has a crucial role in the pathway because the rate of histidine biosynthesis seems to be controlled primarily by regulation of HisG enzymatic activity.</text>
</comment>
<comment type="catalytic activity">
    <reaction evidence="1">
        <text>1-(5-phospho-beta-D-ribosyl)-ATP + diphosphate = 5-phospho-alpha-D-ribose 1-diphosphate + ATP</text>
        <dbReference type="Rhea" id="RHEA:18473"/>
        <dbReference type="ChEBI" id="CHEBI:30616"/>
        <dbReference type="ChEBI" id="CHEBI:33019"/>
        <dbReference type="ChEBI" id="CHEBI:58017"/>
        <dbReference type="ChEBI" id="CHEBI:73183"/>
        <dbReference type="EC" id="2.4.2.17"/>
    </reaction>
</comment>
<comment type="pathway">
    <text evidence="1">Amino-acid biosynthesis; L-histidine biosynthesis; L-histidine from 5-phospho-alpha-D-ribose 1-diphosphate: step 1/9.</text>
</comment>
<comment type="subunit">
    <text evidence="1">Heteromultimer composed of HisG and HisZ subunits.</text>
</comment>
<comment type="subcellular location">
    <subcellularLocation>
        <location evidence="1">Cytoplasm</location>
    </subcellularLocation>
</comment>
<comment type="domain">
    <text>Lacks the C-terminal regulatory region which is replaced by HisZ.</text>
</comment>
<comment type="similarity">
    <text evidence="1">Belongs to the ATP phosphoribosyltransferase family. Short subfamily.</text>
</comment>
<keyword id="KW-0028">Amino-acid biosynthesis</keyword>
<keyword id="KW-0067">ATP-binding</keyword>
<keyword id="KW-0963">Cytoplasm</keyword>
<keyword id="KW-0328">Glycosyltransferase</keyword>
<keyword id="KW-0368">Histidine biosynthesis</keyword>
<keyword id="KW-0547">Nucleotide-binding</keyword>
<keyword id="KW-0808">Transferase</keyword>
<gene>
    <name evidence="1" type="primary">hisG</name>
    <name type="ordered locus">Smed_0405</name>
</gene>
<reference key="1">
    <citation type="submission" date="2007-06" db="EMBL/GenBank/DDBJ databases">
        <title>Complete sequence of Sinorhizobium medicae WSM419 chromosome.</title>
        <authorList>
            <consortium name="US DOE Joint Genome Institute"/>
            <person name="Copeland A."/>
            <person name="Lucas S."/>
            <person name="Lapidus A."/>
            <person name="Barry K."/>
            <person name="Glavina del Rio T."/>
            <person name="Dalin E."/>
            <person name="Tice H."/>
            <person name="Pitluck S."/>
            <person name="Chain P."/>
            <person name="Malfatti S."/>
            <person name="Shin M."/>
            <person name="Vergez L."/>
            <person name="Schmutz J."/>
            <person name="Larimer F."/>
            <person name="Land M."/>
            <person name="Hauser L."/>
            <person name="Kyrpides N."/>
            <person name="Mikhailova N."/>
            <person name="Reeve W.G."/>
            <person name="Richardson P."/>
        </authorList>
    </citation>
    <scope>NUCLEOTIDE SEQUENCE [LARGE SCALE GENOMIC DNA]</scope>
    <source>
        <strain>WSM419</strain>
    </source>
</reference>
<feature type="chain" id="PRO_1000063307" description="ATP phosphoribosyltransferase">
    <location>
        <begin position="1"/>
        <end position="231"/>
    </location>
</feature>